<reference key="1">
    <citation type="submission" date="2007-08" db="EMBL/GenBank/DDBJ databases">
        <title>Complete sequence of Shewanella sediminis HAW-EB3.</title>
        <authorList>
            <consortium name="US DOE Joint Genome Institute"/>
            <person name="Copeland A."/>
            <person name="Lucas S."/>
            <person name="Lapidus A."/>
            <person name="Barry K."/>
            <person name="Glavina del Rio T."/>
            <person name="Dalin E."/>
            <person name="Tice H."/>
            <person name="Pitluck S."/>
            <person name="Chertkov O."/>
            <person name="Brettin T."/>
            <person name="Bruce D."/>
            <person name="Detter J.C."/>
            <person name="Han C."/>
            <person name="Schmutz J."/>
            <person name="Larimer F."/>
            <person name="Land M."/>
            <person name="Hauser L."/>
            <person name="Kyrpides N."/>
            <person name="Kim E."/>
            <person name="Zhao J.-S."/>
            <person name="Richardson P."/>
        </authorList>
    </citation>
    <scope>NUCLEOTIDE SEQUENCE [LARGE SCALE GENOMIC DNA]</scope>
    <source>
        <strain>HAW-EB3</strain>
    </source>
</reference>
<organism>
    <name type="scientific">Shewanella sediminis (strain HAW-EB3)</name>
    <dbReference type="NCBI Taxonomy" id="425104"/>
    <lineage>
        <taxon>Bacteria</taxon>
        <taxon>Pseudomonadati</taxon>
        <taxon>Pseudomonadota</taxon>
        <taxon>Gammaproteobacteria</taxon>
        <taxon>Alteromonadales</taxon>
        <taxon>Shewanellaceae</taxon>
        <taxon>Shewanella</taxon>
    </lineage>
</organism>
<comment type="function">
    <text evidence="1">Isomerase that catalyzes the conversion of deoxy-ribose 1-phosphate (dRib-1-P) and ribose 1-phosphate (Rib-1-P) to deoxy-ribose 5-phosphate (dRib-5-P) and ribose 5-phosphate (Rib-5-P), respectively.</text>
</comment>
<comment type="catalytic activity">
    <reaction evidence="1">
        <text>2-deoxy-alpha-D-ribose 1-phosphate = 2-deoxy-D-ribose 5-phosphate</text>
        <dbReference type="Rhea" id="RHEA:27658"/>
        <dbReference type="ChEBI" id="CHEBI:57259"/>
        <dbReference type="ChEBI" id="CHEBI:62877"/>
        <dbReference type="EC" id="5.4.2.7"/>
    </reaction>
</comment>
<comment type="catalytic activity">
    <reaction evidence="1">
        <text>alpha-D-ribose 1-phosphate = D-ribose 5-phosphate</text>
        <dbReference type="Rhea" id="RHEA:18793"/>
        <dbReference type="ChEBI" id="CHEBI:57720"/>
        <dbReference type="ChEBI" id="CHEBI:78346"/>
        <dbReference type="EC" id="5.4.2.7"/>
    </reaction>
</comment>
<comment type="cofactor">
    <cofactor evidence="1">
        <name>Mn(2+)</name>
        <dbReference type="ChEBI" id="CHEBI:29035"/>
    </cofactor>
    <text evidence="1">Binds 2 manganese ions.</text>
</comment>
<comment type="pathway">
    <text evidence="1">Carbohydrate degradation; 2-deoxy-D-ribose 1-phosphate degradation; D-glyceraldehyde 3-phosphate and acetaldehyde from 2-deoxy-alpha-D-ribose 1-phosphate: step 1/2.</text>
</comment>
<comment type="subcellular location">
    <subcellularLocation>
        <location evidence="1">Cytoplasm</location>
    </subcellularLocation>
</comment>
<comment type="similarity">
    <text evidence="1">Belongs to the phosphopentomutase family.</text>
</comment>
<sequence>MKRTFIMMLDSFGIGAAADAEAFGDTGSDTFGNIAKACAEGKANEGREGPLKLPNLARLGLAQASKESTGQLPAGFSDDVEIIGAYGHADELSTGKDTPSGHWELAGVPVLYEWGYFSDHTNSFPKELTDKILARAGLSDYLGNCHASGTAILEELGNEHMTSGLPIFYTSADSVFQVACHEETFGLENLYTLCQIVREELEPYNIGRVIARPFVGTGPSDFARTGNRRDYAVEPPAKTVLDKLKDSGGEVVSVGKIADIYAHCGITKKIKASGLEALFDATLEELKVAGDNTIVFTNFVDFDSHFGHRRDVAGYARSLEYFDSRLPELMALMGEDDLLLLTADHGCDPTWPGTDHTRERVPVLAYGAGLEAGSLGRRKSFADMGQSIASYFKLEPMEYGESFIK</sequence>
<accession>A8FYQ7</accession>
<keyword id="KW-0963">Cytoplasm</keyword>
<keyword id="KW-0413">Isomerase</keyword>
<keyword id="KW-0464">Manganese</keyword>
<keyword id="KW-0479">Metal-binding</keyword>
<keyword id="KW-1185">Reference proteome</keyword>
<protein>
    <recommendedName>
        <fullName evidence="1">Phosphopentomutase</fullName>
        <ecNumber evidence="1">5.4.2.7</ecNumber>
    </recommendedName>
    <alternativeName>
        <fullName evidence="1">Phosphodeoxyribomutase</fullName>
    </alternativeName>
</protein>
<gene>
    <name evidence="1" type="primary">deoB</name>
    <name type="ordered locus">Ssed_3376</name>
</gene>
<dbReference type="EC" id="5.4.2.7" evidence="1"/>
<dbReference type="EMBL" id="CP000821">
    <property type="protein sequence ID" value="ABV37980.1"/>
    <property type="molecule type" value="Genomic_DNA"/>
</dbReference>
<dbReference type="RefSeq" id="WP_012143710.1">
    <property type="nucleotide sequence ID" value="NC_009831.1"/>
</dbReference>
<dbReference type="SMR" id="A8FYQ7"/>
<dbReference type="STRING" id="425104.Ssed_3376"/>
<dbReference type="KEGG" id="sse:Ssed_3376"/>
<dbReference type="eggNOG" id="COG1015">
    <property type="taxonomic scope" value="Bacteria"/>
</dbReference>
<dbReference type="HOGENOM" id="CLU_053861_0_0_6"/>
<dbReference type="OrthoDB" id="9769930at2"/>
<dbReference type="UniPathway" id="UPA00002">
    <property type="reaction ID" value="UER00467"/>
</dbReference>
<dbReference type="Proteomes" id="UP000002015">
    <property type="component" value="Chromosome"/>
</dbReference>
<dbReference type="GO" id="GO:0005829">
    <property type="term" value="C:cytosol"/>
    <property type="evidence" value="ECO:0007669"/>
    <property type="project" value="TreeGrafter"/>
</dbReference>
<dbReference type="GO" id="GO:0000287">
    <property type="term" value="F:magnesium ion binding"/>
    <property type="evidence" value="ECO:0007669"/>
    <property type="project" value="InterPro"/>
</dbReference>
<dbReference type="GO" id="GO:0030145">
    <property type="term" value="F:manganese ion binding"/>
    <property type="evidence" value="ECO:0007669"/>
    <property type="project" value="UniProtKB-UniRule"/>
</dbReference>
<dbReference type="GO" id="GO:0008973">
    <property type="term" value="F:phosphopentomutase activity"/>
    <property type="evidence" value="ECO:0007669"/>
    <property type="project" value="UniProtKB-UniRule"/>
</dbReference>
<dbReference type="GO" id="GO:0006018">
    <property type="term" value="P:2-deoxyribose 1-phosphate catabolic process"/>
    <property type="evidence" value="ECO:0007669"/>
    <property type="project" value="UniProtKB-UniRule"/>
</dbReference>
<dbReference type="GO" id="GO:0006015">
    <property type="term" value="P:5-phosphoribose 1-diphosphate biosynthetic process"/>
    <property type="evidence" value="ECO:0007669"/>
    <property type="project" value="UniProtKB-UniPathway"/>
</dbReference>
<dbReference type="GO" id="GO:0043094">
    <property type="term" value="P:metabolic compound salvage"/>
    <property type="evidence" value="ECO:0007669"/>
    <property type="project" value="InterPro"/>
</dbReference>
<dbReference type="GO" id="GO:0009117">
    <property type="term" value="P:nucleotide metabolic process"/>
    <property type="evidence" value="ECO:0007669"/>
    <property type="project" value="InterPro"/>
</dbReference>
<dbReference type="CDD" id="cd16009">
    <property type="entry name" value="PPM"/>
    <property type="match status" value="1"/>
</dbReference>
<dbReference type="FunFam" id="3.30.70.1250:FF:000001">
    <property type="entry name" value="Phosphopentomutase"/>
    <property type="match status" value="1"/>
</dbReference>
<dbReference type="Gene3D" id="3.40.720.10">
    <property type="entry name" value="Alkaline Phosphatase, subunit A"/>
    <property type="match status" value="1"/>
</dbReference>
<dbReference type="Gene3D" id="3.30.70.1250">
    <property type="entry name" value="Phosphopentomutase"/>
    <property type="match status" value="1"/>
</dbReference>
<dbReference type="HAMAP" id="MF_00740">
    <property type="entry name" value="Phosphopentomut"/>
    <property type="match status" value="1"/>
</dbReference>
<dbReference type="InterPro" id="IPR017850">
    <property type="entry name" value="Alkaline_phosphatase_core_sf"/>
</dbReference>
<dbReference type="InterPro" id="IPR010045">
    <property type="entry name" value="DeoB"/>
</dbReference>
<dbReference type="InterPro" id="IPR006124">
    <property type="entry name" value="Metalloenzyme"/>
</dbReference>
<dbReference type="InterPro" id="IPR024052">
    <property type="entry name" value="Phosphopentomutase_DeoB_cap_sf"/>
</dbReference>
<dbReference type="NCBIfam" id="TIGR01696">
    <property type="entry name" value="deoB"/>
    <property type="match status" value="1"/>
</dbReference>
<dbReference type="NCBIfam" id="NF003766">
    <property type="entry name" value="PRK05362.1"/>
    <property type="match status" value="1"/>
</dbReference>
<dbReference type="PANTHER" id="PTHR21110">
    <property type="entry name" value="PHOSPHOPENTOMUTASE"/>
    <property type="match status" value="1"/>
</dbReference>
<dbReference type="PANTHER" id="PTHR21110:SF0">
    <property type="entry name" value="PHOSPHOPENTOMUTASE"/>
    <property type="match status" value="1"/>
</dbReference>
<dbReference type="Pfam" id="PF01676">
    <property type="entry name" value="Metalloenzyme"/>
    <property type="match status" value="1"/>
</dbReference>
<dbReference type="PIRSF" id="PIRSF001491">
    <property type="entry name" value="Ppentomutase"/>
    <property type="match status" value="1"/>
</dbReference>
<dbReference type="SUPFAM" id="SSF53649">
    <property type="entry name" value="Alkaline phosphatase-like"/>
    <property type="match status" value="1"/>
</dbReference>
<dbReference type="SUPFAM" id="SSF143856">
    <property type="entry name" value="DeoB insert domain-like"/>
    <property type="match status" value="1"/>
</dbReference>
<name>DEOB_SHESH</name>
<evidence type="ECO:0000255" key="1">
    <source>
        <dbReference type="HAMAP-Rule" id="MF_00740"/>
    </source>
</evidence>
<feature type="chain" id="PRO_1000083443" description="Phosphopentomutase">
    <location>
        <begin position="1"/>
        <end position="405"/>
    </location>
</feature>
<feature type="binding site" evidence="1">
    <location>
        <position position="10"/>
    </location>
    <ligand>
        <name>Mn(2+)</name>
        <dbReference type="ChEBI" id="CHEBI:29035"/>
        <label>1</label>
    </ligand>
</feature>
<feature type="binding site" evidence="1">
    <location>
        <position position="303"/>
    </location>
    <ligand>
        <name>Mn(2+)</name>
        <dbReference type="ChEBI" id="CHEBI:29035"/>
        <label>2</label>
    </ligand>
</feature>
<feature type="binding site" evidence="1">
    <location>
        <position position="308"/>
    </location>
    <ligand>
        <name>Mn(2+)</name>
        <dbReference type="ChEBI" id="CHEBI:29035"/>
        <label>2</label>
    </ligand>
</feature>
<feature type="binding site" evidence="1">
    <location>
        <position position="344"/>
    </location>
    <ligand>
        <name>Mn(2+)</name>
        <dbReference type="ChEBI" id="CHEBI:29035"/>
        <label>1</label>
    </ligand>
</feature>
<feature type="binding site" evidence="1">
    <location>
        <position position="345"/>
    </location>
    <ligand>
        <name>Mn(2+)</name>
        <dbReference type="ChEBI" id="CHEBI:29035"/>
        <label>1</label>
    </ligand>
</feature>
<feature type="binding site" evidence="1">
    <location>
        <position position="356"/>
    </location>
    <ligand>
        <name>Mn(2+)</name>
        <dbReference type="ChEBI" id="CHEBI:29035"/>
        <label>2</label>
    </ligand>
</feature>
<proteinExistence type="inferred from homology"/>